<protein>
    <recommendedName>
        <fullName evidence="1">Small ribosomal subunit protein uS10</fullName>
    </recommendedName>
    <alternativeName>
        <fullName evidence="2">30S ribosomal protein S10</fullName>
    </alternativeName>
</protein>
<reference key="1">
    <citation type="journal article" date="2007" name="J. Bacteriol.">
        <title>Genome sequence and analysis of the soil cellulolytic actinomycete Thermobifida fusca YX.</title>
        <authorList>
            <person name="Lykidis A."/>
            <person name="Mavromatis K."/>
            <person name="Ivanova N."/>
            <person name="Anderson I."/>
            <person name="Land M."/>
            <person name="DiBartolo G."/>
            <person name="Martinez M."/>
            <person name="Lapidus A."/>
            <person name="Lucas S."/>
            <person name="Copeland A."/>
            <person name="Richardson P."/>
            <person name="Wilson D.B."/>
            <person name="Kyrpides N."/>
        </authorList>
    </citation>
    <scope>NUCLEOTIDE SEQUENCE [LARGE SCALE GENOMIC DNA]</scope>
    <source>
        <strain>YX</strain>
    </source>
</reference>
<dbReference type="EMBL" id="CP000088">
    <property type="protein sequence ID" value="AAZ56680.1"/>
    <property type="molecule type" value="Genomic_DNA"/>
</dbReference>
<dbReference type="RefSeq" id="WP_011293070.1">
    <property type="nucleotide sequence ID" value="NC_007333.1"/>
</dbReference>
<dbReference type="SMR" id="Q47LJ2"/>
<dbReference type="STRING" id="269800.Tfu_2647"/>
<dbReference type="KEGG" id="tfu:Tfu_2647"/>
<dbReference type="eggNOG" id="COG0051">
    <property type="taxonomic scope" value="Bacteria"/>
</dbReference>
<dbReference type="HOGENOM" id="CLU_122625_1_3_11"/>
<dbReference type="OrthoDB" id="9804464at2"/>
<dbReference type="GO" id="GO:1990904">
    <property type="term" value="C:ribonucleoprotein complex"/>
    <property type="evidence" value="ECO:0007669"/>
    <property type="project" value="UniProtKB-KW"/>
</dbReference>
<dbReference type="GO" id="GO:0005840">
    <property type="term" value="C:ribosome"/>
    <property type="evidence" value="ECO:0007669"/>
    <property type="project" value="UniProtKB-KW"/>
</dbReference>
<dbReference type="GO" id="GO:0003735">
    <property type="term" value="F:structural constituent of ribosome"/>
    <property type="evidence" value="ECO:0007669"/>
    <property type="project" value="InterPro"/>
</dbReference>
<dbReference type="GO" id="GO:0000049">
    <property type="term" value="F:tRNA binding"/>
    <property type="evidence" value="ECO:0007669"/>
    <property type="project" value="UniProtKB-UniRule"/>
</dbReference>
<dbReference type="GO" id="GO:0006412">
    <property type="term" value="P:translation"/>
    <property type="evidence" value="ECO:0007669"/>
    <property type="project" value="UniProtKB-UniRule"/>
</dbReference>
<dbReference type="FunFam" id="3.30.70.600:FF:000001">
    <property type="entry name" value="30S ribosomal protein S10"/>
    <property type="match status" value="1"/>
</dbReference>
<dbReference type="Gene3D" id="3.30.70.600">
    <property type="entry name" value="Ribosomal protein S10 domain"/>
    <property type="match status" value="1"/>
</dbReference>
<dbReference type="HAMAP" id="MF_00508">
    <property type="entry name" value="Ribosomal_uS10"/>
    <property type="match status" value="1"/>
</dbReference>
<dbReference type="InterPro" id="IPR001848">
    <property type="entry name" value="Ribosomal_uS10"/>
</dbReference>
<dbReference type="InterPro" id="IPR018268">
    <property type="entry name" value="Ribosomal_uS10_CS"/>
</dbReference>
<dbReference type="InterPro" id="IPR027486">
    <property type="entry name" value="Ribosomal_uS10_dom"/>
</dbReference>
<dbReference type="InterPro" id="IPR036838">
    <property type="entry name" value="Ribosomal_uS10_dom_sf"/>
</dbReference>
<dbReference type="NCBIfam" id="NF001861">
    <property type="entry name" value="PRK00596.1"/>
    <property type="match status" value="1"/>
</dbReference>
<dbReference type="NCBIfam" id="TIGR01049">
    <property type="entry name" value="rpsJ_bact"/>
    <property type="match status" value="1"/>
</dbReference>
<dbReference type="PANTHER" id="PTHR11700">
    <property type="entry name" value="30S RIBOSOMAL PROTEIN S10 FAMILY MEMBER"/>
    <property type="match status" value="1"/>
</dbReference>
<dbReference type="Pfam" id="PF00338">
    <property type="entry name" value="Ribosomal_S10"/>
    <property type="match status" value="1"/>
</dbReference>
<dbReference type="PRINTS" id="PR00971">
    <property type="entry name" value="RIBOSOMALS10"/>
</dbReference>
<dbReference type="SMART" id="SM01403">
    <property type="entry name" value="Ribosomal_S10"/>
    <property type="match status" value="1"/>
</dbReference>
<dbReference type="SUPFAM" id="SSF54999">
    <property type="entry name" value="Ribosomal protein S10"/>
    <property type="match status" value="1"/>
</dbReference>
<dbReference type="PROSITE" id="PS00361">
    <property type="entry name" value="RIBOSOMAL_S10"/>
    <property type="match status" value="1"/>
</dbReference>
<organism>
    <name type="scientific">Thermobifida fusca (strain YX)</name>
    <dbReference type="NCBI Taxonomy" id="269800"/>
    <lineage>
        <taxon>Bacteria</taxon>
        <taxon>Bacillati</taxon>
        <taxon>Actinomycetota</taxon>
        <taxon>Actinomycetes</taxon>
        <taxon>Streptosporangiales</taxon>
        <taxon>Nocardiopsidaceae</taxon>
        <taxon>Thermobifida</taxon>
    </lineage>
</organism>
<gene>
    <name evidence="1" type="primary">rpsJ</name>
    <name type="ordered locus">Tfu_2647</name>
</gene>
<accession>Q47LJ2</accession>
<keyword id="KW-0687">Ribonucleoprotein</keyword>
<keyword id="KW-0689">Ribosomal protein</keyword>
<comment type="function">
    <text evidence="1">Involved in the binding of tRNA to the ribosomes.</text>
</comment>
<comment type="subunit">
    <text evidence="1">Part of the 30S ribosomal subunit.</text>
</comment>
<comment type="similarity">
    <text evidence="1">Belongs to the universal ribosomal protein uS10 family.</text>
</comment>
<evidence type="ECO:0000255" key="1">
    <source>
        <dbReference type="HAMAP-Rule" id="MF_00508"/>
    </source>
</evidence>
<evidence type="ECO:0000305" key="2"/>
<sequence>MAGQKIRIRLKAYDHEVIDKSARRIVETVTRTGAQVAGPVPLPTEKNVYCVIRSPHKYKDSREHFEMRTHKRLIDIIDPTPKTVDSLMRLDLPAGVDIEIKL</sequence>
<name>RS10_THEFY</name>
<feature type="chain" id="PRO_0000237112" description="Small ribosomal subunit protein uS10">
    <location>
        <begin position="1"/>
        <end position="102"/>
    </location>
</feature>
<proteinExistence type="inferred from homology"/>